<dbReference type="EMBL" id="AL009126">
    <property type="protein sequence ID" value="CAB13609.2"/>
    <property type="molecule type" value="Genomic_DNA"/>
</dbReference>
<dbReference type="RefSeq" id="NP_389607.2">
    <property type="nucleotide sequence ID" value="NC_000964.3"/>
</dbReference>
<dbReference type="RefSeq" id="WP_003244800.1">
    <property type="nucleotide sequence ID" value="NZ_OZ025638.1"/>
</dbReference>
<dbReference type="SMR" id="O31787"/>
<dbReference type="FunCoup" id="O31787">
    <property type="interactions" value="24"/>
</dbReference>
<dbReference type="STRING" id="224308.BSU17250"/>
<dbReference type="PaxDb" id="224308-BSU17250"/>
<dbReference type="EnsemblBacteria" id="CAB13609">
    <property type="protein sequence ID" value="CAB13609"/>
    <property type="gene ID" value="BSU_17250"/>
</dbReference>
<dbReference type="GeneID" id="940045"/>
<dbReference type="KEGG" id="bsu:BSU17250"/>
<dbReference type="PATRIC" id="fig|224308.43.peg.1821"/>
<dbReference type="eggNOG" id="COG0491">
    <property type="taxonomic scope" value="Bacteria"/>
</dbReference>
<dbReference type="InParanoid" id="O31787"/>
<dbReference type="OrthoDB" id="2373347at2"/>
<dbReference type="BioCyc" id="BSUB:BSU17250-MONOMER"/>
<dbReference type="Proteomes" id="UP000001570">
    <property type="component" value="Chromosome"/>
</dbReference>
<dbReference type="CDD" id="cd07727">
    <property type="entry name" value="YmaE-like_MBL-fold"/>
    <property type="match status" value="1"/>
</dbReference>
<dbReference type="Gene3D" id="3.60.15.10">
    <property type="entry name" value="Ribonuclease Z/Hydroxyacylglutathione hydrolase-like"/>
    <property type="match status" value="1"/>
</dbReference>
<dbReference type="InterPro" id="IPR001279">
    <property type="entry name" value="Metallo-B-lactamas"/>
</dbReference>
<dbReference type="InterPro" id="IPR036866">
    <property type="entry name" value="RibonucZ/Hydroxyglut_hydro"/>
</dbReference>
<dbReference type="PANTHER" id="PTHR36839">
    <property type="entry name" value="METALLO-BETA-LACTAMASE FAMILY PROTEIN (AFU_ORTHOLOGUE AFUA_5G12770)"/>
    <property type="match status" value="1"/>
</dbReference>
<dbReference type="PANTHER" id="PTHR36839:SF1">
    <property type="entry name" value="METALLO-BETA-LACTAMASE FAMILY PROTEIN (AFU_ORTHOLOGUE AFUA_5G12770)"/>
    <property type="match status" value="1"/>
</dbReference>
<dbReference type="SMART" id="SM00849">
    <property type="entry name" value="Lactamase_B"/>
    <property type="match status" value="1"/>
</dbReference>
<dbReference type="SUPFAM" id="SSF56281">
    <property type="entry name" value="Metallo-hydrolase/oxidoreductase"/>
    <property type="match status" value="1"/>
</dbReference>
<keyword id="KW-1185">Reference proteome</keyword>
<name>YMAE_BACSU</name>
<gene>
    <name type="primary">ymaE</name>
    <name type="ordered locus">BSU17250</name>
</gene>
<accession>O31787</accession>
<feature type="chain" id="PRO_0000382894" description="Uncharacterized protein YmaE">
    <location>
        <begin position="1"/>
        <end position="274"/>
    </location>
</feature>
<sequence length="274" mass="31354">MPYYICNTCGVQHAQTVDPPNSCLICEDERQYIHPDGQTWTTLEDMREKGNLQNILKKEEEHLYSIKTEPEFAIGQTAHLIQHKGFNVLWDCMTYLDQKTIDQINELGGIQAIALSHPHYYSTQVEWAEAFQAPIYIHEDDKEWVTRPSNHIHFWSGETLNMKPGLDLYRLGGHFKGGAVLHWSKGNEGKGCLLTGDIITVAADRNWVSFMYSYPNLIPLPASKVEEIAAKVKPLQFNRLYNAFSKVVKENADESVQRSAVRYIKALNSELFHT</sequence>
<protein>
    <recommendedName>
        <fullName>Uncharacterized protein YmaE</fullName>
    </recommendedName>
</protein>
<reference key="1">
    <citation type="journal article" date="1997" name="Nature">
        <title>The complete genome sequence of the Gram-positive bacterium Bacillus subtilis.</title>
        <authorList>
            <person name="Kunst F."/>
            <person name="Ogasawara N."/>
            <person name="Moszer I."/>
            <person name="Albertini A.M."/>
            <person name="Alloni G."/>
            <person name="Azevedo V."/>
            <person name="Bertero M.G."/>
            <person name="Bessieres P."/>
            <person name="Bolotin A."/>
            <person name="Borchert S."/>
            <person name="Borriss R."/>
            <person name="Boursier L."/>
            <person name="Brans A."/>
            <person name="Braun M."/>
            <person name="Brignell S.C."/>
            <person name="Bron S."/>
            <person name="Brouillet S."/>
            <person name="Bruschi C.V."/>
            <person name="Caldwell B."/>
            <person name="Capuano V."/>
            <person name="Carter N.M."/>
            <person name="Choi S.-K."/>
            <person name="Codani J.-J."/>
            <person name="Connerton I.F."/>
            <person name="Cummings N.J."/>
            <person name="Daniel R.A."/>
            <person name="Denizot F."/>
            <person name="Devine K.M."/>
            <person name="Duesterhoeft A."/>
            <person name="Ehrlich S.D."/>
            <person name="Emmerson P.T."/>
            <person name="Entian K.-D."/>
            <person name="Errington J."/>
            <person name="Fabret C."/>
            <person name="Ferrari E."/>
            <person name="Foulger D."/>
            <person name="Fritz C."/>
            <person name="Fujita M."/>
            <person name="Fujita Y."/>
            <person name="Fuma S."/>
            <person name="Galizzi A."/>
            <person name="Galleron N."/>
            <person name="Ghim S.-Y."/>
            <person name="Glaser P."/>
            <person name="Goffeau A."/>
            <person name="Golightly E.J."/>
            <person name="Grandi G."/>
            <person name="Guiseppi G."/>
            <person name="Guy B.J."/>
            <person name="Haga K."/>
            <person name="Haiech J."/>
            <person name="Harwood C.R."/>
            <person name="Henaut A."/>
            <person name="Hilbert H."/>
            <person name="Holsappel S."/>
            <person name="Hosono S."/>
            <person name="Hullo M.-F."/>
            <person name="Itaya M."/>
            <person name="Jones L.-M."/>
            <person name="Joris B."/>
            <person name="Karamata D."/>
            <person name="Kasahara Y."/>
            <person name="Klaerr-Blanchard M."/>
            <person name="Klein C."/>
            <person name="Kobayashi Y."/>
            <person name="Koetter P."/>
            <person name="Koningstein G."/>
            <person name="Krogh S."/>
            <person name="Kumano M."/>
            <person name="Kurita K."/>
            <person name="Lapidus A."/>
            <person name="Lardinois S."/>
            <person name="Lauber J."/>
            <person name="Lazarevic V."/>
            <person name="Lee S.-M."/>
            <person name="Levine A."/>
            <person name="Liu H."/>
            <person name="Masuda S."/>
            <person name="Mauel C."/>
            <person name="Medigue C."/>
            <person name="Medina N."/>
            <person name="Mellado R.P."/>
            <person name="Mizuno M."/>
            <person name="Moestl D."/>
            <person name="Nakai S."/>
            <person name="Noback M."/>
            <person name="Noone D."/>
            <person name="O'Reilly M."/>
            <person name="Ogawa K."/>
            <person name="Ogiwara A."/>
            <person name="Oudega B."/>
            <person name="Park S.-H."/>
            <person name="Parro V."/>
            <person name="Pohl T.M."/>
            <person name="Portetelle D."/>
            <person name="Porwollik S."/>
            <person name="Prescott A.M."/>
            <person name="Presecan E."/>
            <person name="Pujic P."/>
            <person name="Purnelle B."/>
            <person name="Rapoport G."/>
            <person name="Rey M."/>
            <person name="Reynolds S."/>
            <person name="Rieger M."/>
            <person name="Rivolta C."/>
            <person name="Rocha E."/>
            <person name="Roche B."/>
            <person name="Rose M."/>
            <person name="Sadaie Y."/>
            <person name="Sato T."/>
            <person name="Scanlan E."/>
            <person name="Schleich S."/>
            <person name="Schroeter R."/>
            <person name="Scoffone F."/>
            <person name="Sekiguchi J."/>
            <person name="Sekowska A."/>
            <person name="Seror S.J."/>
            <person name="Serror P."/>
            <person name="Shin B.-S."/>
            <person name="Soldo B."/>
            <person name="Sorokin A."/>
            <person name="Tacconi E."/>
            <person name="Takagi T."/>
            <person name="Takahashi H."/>
            <person name="Takemaru K."/>
            <person name="Takeuchi M."/>
            <person name="Tamakoshi A."/>
            <person name="Tanaka T."/>
            <person name="Terpstra P."/>
            <person name="Tognoni A."/>
            <person name="Tosato V."/>
            <person name="Uchiyama S."/>
            <person name="Vandenbol M."/>
            <person name="Vannier F."/>
            <person name="Vassarotti A."/>
            <person name="Viari A."/>
            <person name="Wambutt R."/>
            <person name="Wedler E."/>
            <person name="Wedler H."/>
            <person name="Weitzenegger T."/>
            <person name="Winters P."/>
            <person name="Wipat A."/>
            <person name="Yamamoto H."/>
            <person name="Yamane K."/>
            <person name="Yasumoto K."/>
            <person name="Yata K."/>
            <person name="Yoshida K."/>
            <person name="Yoshikawa H.-F."/>
            <person name="Zumstein E."/>
            <person name="Yoshikawa H."/>
            <person name="Danchin A."/>
        </authorList>
    </citation>
    <scope>NUCLEOTIDE SEQUENCE [LARGE SCALE GENOMIC DNA]</scope>
    <source>
        <strain>168</strain>
    </source>
</reference>
<reference key="2">
    <citation type="journal article" date="2009" name="Microbiology">
        <title>From a consortium sequence to a unified sequence: the Bacillus subtilis 168 reference genome a decade later.</title>
        <authorList>
            <person name="Barbe V."/>
            <person name="Cruveiller S."/>
            <person name="Kunst F."/>
            <person name="Lenoble P."/>
            <person name="Meurice G."/>
            <person name="Sekowska A."/>
            <person name="Vallenet D."/>
            <person name="Wang T."/>
            <person name="Moszer I."/>
            <person name="Medigue C."/>
            <person name="Danchin A."/>
        </authorList>
    </citation>
    <scope>SEQUENCE REVISION TO N-TERMINUS</scope>
</reference>
<organism>
    <name type="scientific">Bacillus subtilis (strain 168)</name>
    <dbReference type="NCBI Taxonomy" id="224308"/>
    <lineage>
        <taxon>Bacteria</taxon>
        <taxon>Bacillati</taxon>
        <taxon>Bacillota</taxon>
        <taxon>Bacilli</taxon>
        <taxon>Bacillales</taxon>
        <taxon>Bacillaceae</taxon>
        <taxon>Bacillus</taxon>
    </lineage>
</organism>
<proteinExistence type="predicted"/>